<keyword id="KW-0520">NAD</keyword>
<keyword id="KW-0560">Oxidoreductase</keyword>
<keyword id="KW-1185">Reference proteome</keyword>
<accession>B0KCW3</accession>
<feature type="chain" id="PRO_1000099207" description="Mannitol-1-phosphate 5-dehydrogenase">
    <location>
        <begin position="1"/>
        <end position="388"/>
    </location>
</feature>
<feature type="binding site" evidence="1">
    <location>
        <begin position="4"/>
        <end position="15"/>
    </location>
    <ligand>
        <name>NAD(+)</name>
        <dbReference type="ChEBI" id="CHEBI:57540"/>
    </ligand>
</feature>
<sequence length="388" mass="44487">MLKAVHFGAGNIGRGFIGYLLYKSGYEITFVDISKELVESINNYKRYNVIILKDNVEKEEVKNIKAIHIEDEENLSKAIVDADIITTSVGANNLKSIGEKLRNYLKIRKANIDKPLNIMACENALFATNILKNSILEKGDKDFIEYVNQKIGFPNTAVDRIVPNVDIKKELPIDVAVEDFYEWDIEKKAIIGDLNIKGAELVDDLEPYIERKLFLLNGAHATTAYLGYLKGYKYIHEAIQDDFIRNIVSKMQEEASIALSKKHNIKIDNLREYSNKVIKRFKNSYLKDEVVRVGREPTRKLSGNDRLMMPAKLCYEIGITPKFILYGIAAGFLFDYKEDPQACKIQDDIKNFGLEKTISKITGLEENSDLLHEIVKKYKELKETFRKR</sequence>
<protein>
    <recommendedName>
        <fullName evidence="1">Mannitol-1-phosphate 5-dehydrogenase</fullName>
        <ecNumber evidence="1">1.1.1.17</ecNumber>
    </recommendedName>
</protein>
<evidence type="ECO:0000255" key="1">
    <source>
        <dbReference type="HAMAP-Rule" id="MF_00196"/>
    </source>
</evidence>
<dbReference type="EC" id="1.1.1.17" evidence="1"/>
<dbReference type="EMBL" id="CP000924">
    <property type="protein sequence ID" value="ABY95570.1"/>
    <property type="molecule type" value="Genomic_DNA"/>
</dbReference>
<dbReference type="RefSeq" id="WP_012269671.1">
    <property type="nucleotide sequence ID" value="NC_010321.1"/>
</dbReference>
<dbReference type="SMR" id="B0KCW3"/>
<dbReference type="STRING" id="340099.Teth39_1939"/>
<dbReference type="KEGG" id="tpd:Teth39_1939"/>
<dbReference type="eggNOG" id="COG0246">
    <property type="taxonomic scope" value="Bacteria"/>
</dbReference>
<dbReference type="HOGENOM" id="CLU_036089_2_0_9"/>
<dbReference type="Proteomes" id="UP000002156">
    <property type="component" value="Chromosome"/>
</dbReference>
<dbReference type="GO" id="GO:0005829">
    <property type="term" value="C:cytosol"/>
    <property type="evidence" value="ECO:0007669"/>
    <property type="project" value="TreeGrafter"/>
</dbReference>
<dbReference type="GO" id="GO:0008926">
    <property type="term" value="F:mannitol-1-phosphate 5-dehydrogenase activity"/>
    <property type="evidence" value="ECO:0007669"/>
    <property type="project" value="UniProtKB-UniRule"/>
</dbReference>
<dbReference type="GO" id="GO:0019592">
    <property type="term" value="P:mannitol catabolic process"/>
    <property type="evidence" value="ECO:0007669"/>
    <property type="project" value="TreeGrafter"/>
</dbReference>
<dbReference type="Gene3D" id="1.10.1040.10">
    <property type="entry name" value="N-(1-d-carboxylethyl)-l-norvaline Dehydrogenase, domain 2"/>
    <property type="match status" value="1"/>
</dbReference>
<dbReference type="Gene3D" id="3.40.50.720">
    <property type="entry name" value="NAD(P)-binding Rossmann-like Domain"/>
    <property type="match status" value="1"/>
</dbReference>
<dbReference type="HAMAP" id="MF_00196">
    <property type="entry name" value="Mannitol_dehydrog"/>
    <property type="match status" value="1"/>
</dbReference>
<dbReference type="InterPro" id="IPR008927">
    <property type="entry name" value="6-PGluconate_DH-like_C_sf"/>
</dbReference>
<dbReference type="InterPro" id="IPR013328">
    <property type="entry name" value="6PGD_dom2"/>
</dbReference>
<dbReference type="InterPro" id="IPR023028">
    <property type="entry name" value="Mannitol_1_phos_5_DH"/>
</dbReference>
<dbReference type="InterPro" id="IPR000669">
    <property type="entry name" value="Mannitol_DH"/>
</dbReference>
<dbReference type="InterPro" id="IPR013118">
    <property type="entry name" value="Mannitol_DH_C"/>
</dbReference>
<dbReference type="InterPro" id="IPR023027">
    <property type="entry name" value="Mannitol_DH_CS"/>
</dbReference>
<dbReference type="InterPro" id="IPR013131">
    <property type="entry name" value="Mannitol_DH_N"/>
</dbReference>
<dbReference type="InterPro" id="IPR036291">
    <property type="entry name" value="NAD(P)-bd_dom_sf"/>
</dbReference>
<dbReference type="NCBIfam" id="NF002652">
    <property type="entry name" value="PRK02318.2-5"/>
    <property type="match status" value="1"/>
</dbReference>
<dbReference type="NCBIfam" id="NF002653">
    <property type="entry name" value="PRK02318.2-6"/>
    <property type="match status" value="1"/>
</dbReference>
<dbReference type="PANTHER" id="PTHR30524:SF0">
    <property type="entry name" value="ALTRONATE OXIDOREDUCTASE-RELATED"/>
    <property type="match status" value="1"/>
</dbReference>
<dbReference type="PANTHER" id="PTHR30524">
    <property type="entry name" value="MANNITOL-1-PHOSPHATE 5-DEHYDROGENASE"/>
    <property type="match status" value="1"/>
</dbReference>
<dbReference type="Pfam" id="PF01232">
    <property type="entry name" value="Mannitol_dh"/>
    <property type="match status" value="1"/>
</dbReference>
<dbReference type="Pfam" id="PF08125">
    <property type="entry name" value="Mannitol_dh_C"/>
    <property type="match status" value="1"/>
</dbReference>
<dbReference type="PRINTS" id="PR00084">
    <property type="entry name" value="MTLDHDRGNASE"/>
</dbReference>
<dbReference type="SUPFAM" id="SSF48179">
    <property type="entry name" value="6-phosphogluconate dehydrogenase C-terminal domain-like"/>
    <property type="match status" value="1"/>
</dbReference>
<dbReference type="SUPFAM" id="SSF51735">
    <property type="entry name" value="NAD(P)-binding Rossmann-fold domains"/>
    <property type="match status" value="1"/>
</dbReference>
<dbReference type="PROSITE" id="PS00974">
    <property type="entry name" value="MANNITOL_DHGENASE"/>
    <property type="match status" value="1"/>
</dbReference>
<organism>
    <name type="scientific">Thermoanaerobacter pseudethanolicus (strain ATCC 33223 / 39E)</name>
    <name type="common">Clostridium thermohydrosulfuricum</name>
    <dbReference type="NCBI Taxonomy" id="340099"/>
    <lineage>
        <taxon>Bacteria</taxon>
        <taxon>Bacillati</taxon>
        <taxon>Bacillota</taxon>
        <taxon>Clostridia</taxon>
        <taxon>Thermoanaerobacterales</taxon>
        <taxon>Thermoanaerobacteraceae</taxon>
        <taxon>Thermoanaerobacter</taxon>
    </lineage>
</organism>
<reference key="1">
    <citation type="submission" date="2008-01" db="EMBL/GenBank/DDBJ databases">
        <title>Complete sequence of Thermoanaerobacter pseudethanolicus 39E.</title>
        <authorList>
            <person name="Copeland A."/>
            <person name="Lucas S."/>
            <person name="Lapidus A."/>
            <person name="Barry K."/>
            <person name="Glavina del Rio T."/>
            <person name="Dalin E."/>
            <person name="Tice H."/>
            <person name="Pitluck S."/>
            <person name="Bruce D."/>
            <person name="Goodwin L."/>
            <person name="Saunders E."/>
            <person name="Brettin T."/>
            <person name="Detter J.C."/>
            <person name="Han C."/>
            <person name="Schmutz J."/>
            <person name="Larimer F."/>
            <person name="Land M."/>
            <person name="Hauser L."/>
            <person name="Kyrpides N."/>
            <person name="Lykidis A."/>
            <person name="Hemme C."/>
            <person name="Fields M.W."/>
            <person name="He Z."/>
            <person name="Zhou J."/>
            <person name="Richardson P."/>
        </authorList>
    </citation>
    <scope>NUCLEOTIDE SEQUENCE [LARGE SCALE GENOMIC DNA]</scope>
    <source>
        <strain>ATCC 33223 / DSM 2355 / 39E</strain>
    </source>
</reference>
<proteinExistence type="inferred from homology"/>
<name>MTLD_THEP3</name>
<comment type="catalytic activity">
    <reaction evidence="1">
        <text>D-mannitol 1-phosphate + NAD(+) = beta-D-fructose 6-phosphate + NADH + H(+)</text>
        <dbReference type="Rhea" id="RHEA:19661"/>
        <dbReference type="ChEBI" id="CHEBI:15378"/>
        <dbReference type="ChEBI" id="CHEBI:57540"/>
        <dbReference type="ChEBI" id="CHEBI:57634"/>
        <dbReference type="ChEBI" id="CHEBI:57945"/>
        <dbReference type="ChEBI" id="CHEBI:61381"/>
        <dbReference type="EC" id="1.1.1.17"/>
    </reaction>
</comment>
<comment type="similarity">
    <text evidence="1">Belongs to the mannitol dehydrogenase family.</text>
</comment>
<gene>
    <name evidence="1" type="primary">mtlD</name>
    <name type="ordered locus">Teth39_1939</name>
</gene>